<gene>
    <name type="primary">DREB1G</name>
    <name type="synonym">ERF25</name>
    <name type="ordered locus">Os02g0677300</name>
    <name type="ordered locus">LOC_Os02g45450</name>
    <name type="ORF">OsJ_007653</name>
    <name type="ORF">OSJNBb0005A04.16</name>
    <name type="ORF">P0135D07.43</name>
</gene>
<comment type="function">
    <text evidence="1">Transcriptional activator that binds specifically to the DNA sequence 5'-[AG]CCGAC-3'. Binding to the C-repeat/DRE element mediates high salinity- and dehydration-inducible transcription (By similarity).</text>
</comment>
<comment type="subcellular location">
    <subcellularLocation>
        <location evidence="4">Nucleus</location>
    </subcellularLocation>
</comment>
<comment type="similarity">
    <text evidence="4">Belongs to the AP2/ERF transcription factor family. ERF subfamily.</text>
</comment>
<evidence type="ECO:0000250" key="1"/>
<evidence type="ECO:0000255" key="2">
    <source>
        <dbReference type="PROSITE-ProRule" id="PRU00366"/>
    </source>
</evidence>
<evidence type="ECO:0000256" key="3">
    <source>
        <dbReference type="SAM" id="MobiDB-lite"/>
    </source>
</evidence>
<evidence type="ECO:0000305" key="4"/>
<name>DRE1G_ORYSJ</name>
<feature type="chain" id="PRO_0000323045" description="Dehydration-responsive element-binding protein 1G">
    <location>
        <begin position="1"/>
        <end position="224"/>
    </location>
</feature>
<feature type="DNA-binding region" description="AP2/ERF" evidence="2">
    <location>
        <begin position="54"/>
        <end position="111"/>
    </location>
</feature>
<feature type="region of interest" description="Disordered" evidence="3">
    <location>
        <begin position="1"/>
        <end position="46"/>
    </location>
</feature>
<feature type="region of interest" description="Disordered" evidence="3">
    <location>
        <begin position="139"/>
        <end position="161"/>
    </location>
</feature>
<feature type="region of interest" description="Disordered" evidence="3">
    <location>
        <begin position="200"/>
        <end position="224"/>
    </location>
</feature>
<feature type="compositionally biased region" description="Polar residues" evidence="3">
    <location>
        <begin position="1"/>
        <end position="16"/>
    </location>
</feature>
<reference key="1">
    <citation type="journal article" date="2005" name="Nature">
        <title>The map-based sequence of the rice genome.</title>
        <authorList>
            <consortium name="International rice genome sequencing project (IRGSP)"/>
        </authorList>
    </citation>
    <scope>NUCLEOTIDE SEQUENCE [LARGE SCALE GENOMIC DNA]</scope>
    <source>
        <strain>cv. Nipponbare</strain>
    </source>
</reference>
<reference key="2">
    <citation type="journal article" date="2008" name="Nucleic Acids Res.">
        <title>The rice annotation project database (RAP-DB): 2008 update.</title>
        <authorList>
            <consortium name="The rice annotation project (RAP)"/>
        </authorList>
    </citation>
    <scope>GENOME REANNOTATION</scope>
    <source>
        <strain>cv. Nipponbare</strain>
    </source>
</reference>
<reference key="3">
    <citation type="journal article" date="2013" name="Rice">
        <title>Improvement of the Oryza sativa Nipponbare reference genome using next generation sequence and optical map data.</title>
        <authorList>
            <person name="Kawahara Y."/>
            <person name="de la Bastide M."/>
            <person name="Hamilton J.P."/>
            <person name="Kanamori H."/>
            <person name="McCombie W.R."/>
            <person name="Ouyang S."/>
            <person name="Schwartz D.C."/>
            <person name="Tanaka T."/>
            <person name="Wu J."/>
            <person name="Zhou S."/>
            <person name="Childs K.L."/>
            <person name="Davidson R.M."/>
            <person name="Lin H."/>
            <person name="Quesada-Ocampo L."/>
            <person name="Vaillancourt B."/>
            <person name="Sakai H."/>
            <person name="Lee S.S."/>
            <person name="Kim J."/>
            <person name="Numa H."/>
            <person name="Itoh T."/>
            <person name="Buell C.R."/>
            <person name="Matsumoto T."/>
        </authorList>
    </citation>
    <scope>GENOME REANNOTATION</scope>
    <source>
        <strain>cv. Nipponbare</strain>
    </source>
</reference>
<reference key="4">
    <citation type="journal article" date="2005" name="PLoS Biol.">
        <title>The genomes of Oryza sativa: a history of duplications.</title>
        <authorList>
            <person name="Yu J."/>
            <person name="Wang J."/>
            <person name="Lin W."/>
            <person name="Li S."/>
            <person name="Li H."/>
            <person name="Zhou J."/>
            <person name="Ni P."/>
            <person name="Dong W."/>
            <person name="Hu S."/>
            <person name="Zeng C."/>
            <person name="Zhang J."/>
            <person name="Zhang Y."/>
            <person name="Li R."/>
            <person name="Xu Z."/>
            <person name="Li S."/>
            <person name="Li X."/>
            <person name="Zheng H."/>
            <person name="Cong L."/>
            <person name="Lin L."/>
            <person name="Yin J."/>
            <person name="Geng J."/>
            <person name="Li G."/>
            <person name="Shi J."/>
            <person name="Liu J."/>
            <person name="Lv H."/>
            <person name="Li J."/>
            <person name="Wang J."/>
            <person name="Deng Y."/>
            <person name="Ran L."/>
            <person name="Shi X."/>
            <person name="Wang X."/>
            <person name="Wu Q."/>
            <person name="Li C."/>
            <person name="Ren X."/>
            <person name="Wang J."/>
            <person name="Wang X."/>
            <person name="Li D."/>
            <person name="Liu D."/>
            <person name="Zhang X."/>
            <person name="Ji Z."/>
            <person name="Zhao W."/>
            <person name="Sun Y."/>
            <person name="Zhang Z."/>
            <person name="Bao J."/>
            <person name="Han Y."/>
            <person name="Dong L."/>
            <person name="Ji J."/>
            <person name="Chen P."/>
            <person name="Wu S."/>
            <person name="Liu J."/>
            <person name="Xiao Y."/>
            <person name="Bu D."/>
            <person name="Tan J."/>
            <person name="Yang L."/>
            <person name="Ye C."/>
            <person name="Zhang J."/>
            <person name="Xu J."/>
            <person name="Zhou Y."/>
            <person name="Yu Y."/>
            <person name="Zhang B."/>
            <person name="Zhuang S."/>
            <person name="Wei H."/>
            <person name="Liu B."/>
            <person name="Lei M."/>
            <person name="Yu H."/>
            <person name="Li Y."/>
            <person name="Xu H."/>
            <person name="Wei S."/>
            <person name="He X."/>
            <person name="Fang L."/>
            <person name="Zhang Z."/>
            <person name="Zhang Y."/>
            <person name="Huang X."/>
            <person name="Su Z."/>
            <person name="Tong W."/>
            <person name="Li J."/>
            <person name="Tong Z."/>
            <person name="Li S."/>
            <person name="Ye J."/>
            <person name="Wang L."/>
            <person name="Fang L."/>
            <person name="Lei T."/>
            <person name="Chen C.-S."/>
            <person name="Chen H.-C."/>
            <person name="Xu Z."/>
            <person name="Li H."/>
            <person name="Huang H."/>
            <person name="Zhang F."/>
            <person name="Xu H."/>
            <person name="Li N."/>
            <person name="Zhao C."/>
            <person name="Li S."/>
            <person name="Dong L."/>
            <person name="Huang Y."/>
            <person name="Li L."/>
            <person name="Xi Y."/>
            <person name="Qi Q."/>
            <person name="Li W."/>
            <person name="Zhang B."/>
            <person name="Hu W."/>
            <person name="Zhang Y."/>
            <person name="Tian X."/>
            <person name="Jiao Y."/>
            <person name="Liang X."/>
            <person name="Jin J."/>
            <person name="Gao L."/>
            <person name="Zheng W."/>
            <person name="Hao B."/>
            <person name="Liu S.-M."/>
            <person name="Wang W."/>
            <person name="Yuan L."/>
            <person name="Cao M."/>
            <person name="McDermott J."/>
            <person name="Samudrala R."/>
            <person name="Wang J."/>
            <person name="Wong G.K.-S."/>
            <person name="Yang H."/>
        </authorList>
    </citation>
    <scope>NUCLEOTIDE SEQUENCE [LARGE SCALE GENOMIC DNA]</scope>
    <source>
        <strain>cv. Nipponbare</strain>
    </source>
</reference>
<reference key="5">
    <citation type="journal article" date="2003" name="Science">
        <title>Collection, mapping, and annotation of over 28,000 cDNA clones from japonica rice.</title>
        <authorList>
            <consortium name="The rice full-length cDNA consortium"/>
        </authorList>
    </citation>
    <scope>NUCLEOTIDE SEQUENCE [LARGE SCALE MRNA]</scope>
    <source>
        <strain>cv. Nipponbare</strain>
    </source>
</reference>
<reference key="6">
    <citation type="journal article" date="2005" name="Plant Mol. Biol.">
        <title>Structural, functional, and phylogenetic characterization of a large CBF gene family in barley.</title>
        <authorList>
            <person name="Skinner J.S."/>
            <person name="von Zitzewitz J."/>
            <person name="Szuecs P."/>
            <person name="Marquez-Cedillo L."/>
            <person name="Filichkin T."/>
            <person name="Amundsen K."/>
            <person name="Stockinger E.J."/>
            <person name="Thomashow M.F."/>
            <person name="Chen T.H.H."/>
            <person name="Hayes P.M."/>
        </authorList>
    </citation>
    <scope>GENE FAMILY</scope>
    <source>
        <strain>cv. Nipponbare</strain>
    </source>
</reference>
<reference key="7">
    <citation type="journal article" date="2006" name="Plant Physiol.">
        <title>Genome-wide analysis of the ERF gene family in Arabidopsis and rice.</title>
        <authorList>
            <person name="Nakano T."/>
            <person name="Suzuki K."/>
            <person name="Fujimura T."/>
            <person name="Shinshi H."/>
        </authorList>
    </citation>
    <scope>GENE FAMILY</scope>
    <scope>NOMENCLATURE</scope>
</reference>
<protein>
    <recommendedName>
        <fullName>Dehydration-responsive element-binding protein 1G</fullName>
        <shortName>Protein DREB1G</shortName>
    </recommendedName>
</protein>
<proteinExistence type="evidence at transcript level"/>
<accession>Q6EP77</accession>
<accession>B7E541</accession>
<sequence>MDVSAALSSDYSSGTPSPVAADADDGSSAYMTVSSAPPKRRAGRTKFKETRHPVFKGVRRRNPGRWVCEVREPHGKQRIWLGTFETAEMAARAHDVAALALRGRAACLNFADSPRRLRVPPIGASHDDIRRAAAEAAEAFRPPPDESNAATEVAAAASGATNSNAEQFASHPYYEVMDDGLDLGMQGYLDMAQGMLIDPPPMAGDPAVGSGEDDNDGEVQLWSY</sequence>
<keyword id="KW-0010">Activator</keyword>
<keyword id="KW-0238">DNA-binding</keyword>
<keyword id="KW-0539">Nucleus</keyword>
<keyword id="KW-1185">Reference proteome</keyword>
<keyword id="KW-0346">Stress response</keyword>
<keyword id="KW-0804">Transcription</keyword>
<keyword id="KW-0805">Transcription regulation</keyword>
<organism>
    <name type="scientific">Oryza sativa subsp. japonica</name>
    <name type="common">Rice</name>
    <dbReference type="NCBI Taxonomy" id="39947"/>
    <lineage>
        <taxon>Eukaryota</taxon>
        <taxon>Viridiplantae</taxon>
        <taxon>Streptophyta</taxon>
        <taxon>Embryophyta</taxon>
        <taxon>Tracheophyta</taxon>
        <taxon>Spermatophyta</taxon>
        <taxon>Magnoliopsida</taxon>
        <taxon>Liliopsida</taxon>
        <taxon>Poales</taxon>
        <taxon>Poaceae</taxon>
        <taxon>BOP clade</taxon>
        <taxon>Oryzoideae</taxon>
        <taxon>Oryzeae</taxon>
        <taxon>Oryzinae</taxon>
        <taxon>Oryza</taxon>
        <taxon>Oryza sativa</taxon>
    </lineage>
</organism>
<dbReference type="EMBL" id="AP005775">
    <property type="protein sequence ID" value="BAD29237.1"/>
    <property type="molecule type" value="Genomic_DNA"/>
</dbReference>
<dbReference type="EMBL" id="AP006060">
    <property type="protein sequence ID" value="BAD29543.1"/>
    <property type="molecule type" value="Genomic_DNA"/>
</dbReference>
<dbReference type="EMBL" id="AP008208">
    <property type="protein sequence ID" value="BAF09641.1"/>
    <property type="molecule type" value="Genomic_DNA"/>
</dbReference>
<dbReference type="EMBL" id="AP014958">
    <property type="protein sequence ID" value="BAS80276.1"/>
    <property type="molecule type" value="Genomic_DNA"/>
</dbReference>
<dbReference type="EMBL" id="CM000139">
    <property type="protein sequence ID" value="EAZ24170.1"/>
    <property type="molecule type" value="Genomic_DNA"/>
</dbReference>
<dbReference type="EMBL" id="AK060550">
    <property type="protein sequence ID" value="BAG87488.1"/>
    <property type="molecule type" value="mRNA"/>
</dbReference>
<dbReference type="EMBL" id="AK106041">
    <property type="protein sequence ID" value="BAG97525.1"/>
    <property type="molecule type" value="mRNA"/>
</dbReference>
<dbReference type="RefSeq" id="XP_015624757.1">
    <property type="nucleotide sequence ID" value="XM_015769271.1"/>
</dbReference>
<dbReference type="SMR" id="Q6EP77"/>
<dbReference type="FunCoup" id="Q6EP77">
    <property type="interactions" value="591"/>
</dbReference>
<dbReference type="STRING" id="39947.Q6EP77"/>
<dbReference type="PaxDb" id="39947-Q6EP77"/>
<dbReference type="EnsemblPlants" id="Os02t0677300-02">
    <property type="protein sequence ID" value="Os02t0677300-02"/>
    <property type="gene ID" value="Os02g0677300"/>
</dbReference>
<dbReference type="Gramene" id="Os02t0677300-02">
    <property type="protein sequence ID" value="Os02t0677300-02"/>
    <property type="gene ID" value="Os02g0677300"/>
</dbReference>
<dbReference type="KEGG" id="dosa:Os02g0677300"/>
<dbReference type="eggNOG" id="ENOG502QQ5M">
    <property type="taxonomic scope" value="Eukaryota"/>
</dbReference>
<dbReference type="HOGENOM" id="CLU_063331_1_0_1"/>
<dbReference type="InParanoid" id="Q6EP77"/>
<dbReference type="OMA" id="ADQFRPP"/>
<dbReference type="OrthoDB" id="676764at2759"/>
<dbReference type="PlantReactome" id="R-OSA-8879007">
    <property type="pathway name" value="Response to cold temperature"/>
</dbReference>
<dbReference type="PlantReactome" id="R-OSA-9826782">
    <property type="pathway name" value="Regulation of seed germination and coleoptile growth under submergence and normal gravity environment"/>
</dbReference>
<dbReference type="Proteomes" id="UP000000763">
    <property type="component" value="Chromosome 2"/>
</dbReference>
<dbReference type="Proteomes" id="UP000007752">
    <property type="component" value="Chromosome 2"/>
</dbReference>
<dbReference type="Proteomes" id="UP000059680">
    <property type="component" value="Chromosome 2"/>
</dbReference>
<dbReference type="GO" id="GO:0005634">
    <property type="term" value="C:nucleus"/>
    <property type="evidence" value="ECO:0007669"/>
    <property type="project" value="UniProtKB-SubCell"/>
</dbReference>
<dbReference type="GO" id="GO:0003677">
    <property type="term" value="F:DNA binding"/>
    <property type="evidence" value="ECO:0007669"/>
    <property type="project" value="UniProtKB-KW"/>
</dbReference>
<dbReference type="GO" id="GO:0003700">
    <property type="term" value="F:DNA-binding transcription factor activity"/>
    <property type="evidence" value="ECO:0007669"/>
    <property type="project" value="InterPro"/>
</dbReference>
<dbReference type="CDD" id="cd00018">
    <property type="entry name" value="AP2"/>
    <property type="match status" value="1"/>
</dbReference>
<dbReference type="FunFam" id="3.30.730.10:FF:000001">
    <property type="entry name" value="Ethylene-responsive transcription factor 2"/>
    <property type="match status" value="1"/>
</dbReference>
<dbReference type="Gene3D" id="3.30.730.10">
    <property type="entry name" value="AP2/ERF domain"/>
    <property type="match status" value="1"/>
</dbReference>
<dbReference type="InterPro" id="IPR001471">
    <property type="entry name" value="AP2/ERF_dom"/>
</dbReference>
<dbReference type="InterPro" id="IPR036955">
    <property type="entry name" value="AP2/ERF_dom_sf"/>
</dbReference>
<dbReference type="InterPro" id="IPR016177">
    <property type="entry name" value="DNA-bd_dom_sf"/>
</dbReference>
<dbReference type="InterPro" id="IPR045277">
    <property type="entry name" value="DRE1A-I"/>
</dbReference>
<dbReference type="PANTHER" id="PTHR31839">
    <property type="entry name" value="DEHYDRATION-RESPONSIVE ELEMENT-BINDING PROTEIN 1D"/>
    <property type="match status" value="1"/>
</dbReference>
<dbReference type="PANTHER" id="PTHR31839:SF2">
    <property type="entry name" value="DEHYDRATION-RESPONSIVE ELEMENT-BINDING PROTEIN 1D"/>
    <property type="match status" value="1"/>
</dbReference>
<dbReference type="Pfam" id="PF00847">
    <property type="entry name" value="AP2"/>
    <property type="match status" value="1"/>
</dbReference>
<dbReference type="PRINTS" id="PR00367">
    <property type="entry name" value="ETHRSPELEMNT"/>
</dbReference>
<dbReference type="SMART" id="SM00380">
    <property type="entry name" value="AP2"/>
    <property type="match status" value="1"/>
</dbReference>
<dbReference type="SUPFAM" id="SSF54171">
    <property type="entry name" value="DNA-binding domain"/>
    <property type="match status" value="1"/>
</dbReference>
<dbReference type="PROSITE" id="PS51032">
    <property type="entry name" value="AP2_ERF"/>
    <property type="match status" value="1"/>
</dbReference>